<reference key="1">
    <citation type="journal article" date="2002" name="Proteomics">
        <title>High pressure effects step-wise altered protein expression in Lactobacillus sanfranciscensis.</title>
        <authorList>
            <person name="Drews O."/>
            <person name="Weiss W."/>
            <person name="Reil G."/>
            <person name="Parlar H."/>
            <person name="Wait R."/>
            <person name="Goerg A."/>
        </authorList>
    </citation>
    <scope>PROTEIN SEQUENCE</scope>
    <scope>INDUCTION</scope>
    <source>
        <strain>ATCC 27651 / DSM 20451 / JCM 5668 / KCTC 3205 / NCIMB 702811 / NRRL B-3934 / L-12</strain>
    </source>
</reference>
<keyword id="KW-0067">ATP-binding</keyword>
<keyword id="KW-0903">Direct protein sequencing</keyword>
<keyword id="KW-0315">Glutamine amidotransferase</keyword>
<keyword id="KW-0332">GMP biosynthesis</keyword>
<keyword id="KW-0436">Ligase</keyword>
<keyword id="KW-0547">Nucleotide-binding</keyword>
<keyword id="KW-0658">Purine biosynthesis</keyword>
<proteinExistence type="evidence at protein level"/>
<comment type="function">
    <text evidence="1">Catalyzes the synthesis of GMP from XMP.</text>
</comment>
<comment type="catalytic activity">
    <reaction>
        <text>XMP + L-glutamine + ATP + H2O = GMP + L-glutamate + AMP + diphosphate + 2 H(+)</text>
        <dbReference type="Rhea" id="RHEA:11680"/>
        <dbReference type="ChEBI" id="CHEBI:15377"/>
        <dbReference type="ChEBI" id="CHEBI:15378"/>
        <dbReference type="ChEBI" id="CHEBI:29985"/>
        <dbReference type="ChEBI" id="CHEBI:30616"/>
        <dbReference type="ChEBI" id="CHEBI:33019"/>
        <dbReference type="ChEBI" id="CHEBI:57464"/>
        <dbReference type="ChEBI" id="CHEBI:58115"/>
        <dbReference type="ChEBI" id="CHEBI:58359"/>
        <dbReference type="ChEBI" id="CHEBI:456215"/>
        <dbReference type="EC" id="6.3.5.2"/>
    </reaction>
</comment>
<comment type="pathway">
    <text>Purine metabolism; GMP biosynthesis; GMP from XMP (L-Gln route): step 1/1.</text>
</comment>
<comment type="subunit">
    <text evidence="1">Homodimer.</text>
</comment>
<comment type="induction">
    <text evidence="2">Repressed by elevated hydrostatic pressure.</text>
</comment>
<evidence type="ECO:0000250" key="1"/>
<evidence type="ECO:0000269" key="2">
    <source>
    </source>
</evidence>
<evidence type="ECO:0000305" key="3"/>
<protein>
    <recommendedName>
        <fullName>GMP synthase [glutamine-hydrolyzing]</fullName>
        <ecNumber>6.3.5.2</ecNumber>
    </recommendedName>
    <alternativeName>
        <fullName>GMP synthetase</fullName>
    </alternativeName>
    <alternativeName>
        <fullName>Glutamine amidotransferase</fullName>
    </alternativeName>
</protein>
<gene>
    <name type="primary">guaA</name>
</gene>
<organism>
    <name type="scientific">Fructilactobacillus sanfranciscensis</name>
    <name type="common">Lactobacillus sanfranciscensis</name>
    <dbReference type="NCBI Taxonomy" id="1625"/>
    <lineage>
        <taxon>Bacteria</taxon>
        <taxon>Bacillati</taxon>
        <taxon>Bacillota</taxon>
        <taxon>Bacilli</taxon>
        <taxon>Lactobacillales</taxon>
        <taxon>Lactobacillaceae</taxon>
        <taxon>Fructilactobacillus</taxon>
    </lineage>
</organism>
<dbReference type="EC" id="6.3.5.2"/>
<dbReference type="UniPathway" id="UPA00189">
    <property type="reaction ID" value="UER00296"/>
</dbReference>
<dbReference type="GO" id="GO:0005524">
    <property type="term" value="F:ATP binding"/>
    <property type="evidence" value="ECO:0007669"/>
    <property type="project" value="UniProtKB-KW"/>
</dbReference>
<dbReference type="GO" id="GO:0003922">
    <property type="term" value="F:GMP synthase (glutamine-hydrolyzing) activity"/>
    <property type="evidence" value="ECO:0007669"/>
    <property type="project" value="UniProtKB-EC"/>
</dbReference>
<feature type="chain" id="PRO_0000140140" description="GMP synthase [glutamine-hydrolyzing]">
    <location>
        <begin position="1" status="less than"/>
        <end position="20" status="greater than"/>
    </location>
</feature>
<feature type="domain" description="GMPS ATP-PPase">
    <location>
        <begin position="1" status="less than"/>
        <end position="20" status="greater than"/>
    </location>
</feature>
<feature type="non-consecutive residues" evidence="3">
    <location>
        <begin position="14"/>
        <end position="15"/>
    </location>
</feature>
<feature type="non-terminal residue">
    <location>
        <position position="1"/>
    </location>
</feature>
<feature type="non-terminal residue">
    <location>
        <position position="20"/>
    </location>
</feature>
<name>GUAA_FRUSA</name>
<sequence>ALGDQLLSVFVDHTLVDEVA</sequence>
<accession>P83540</accession>